<keyword id="KW-0963">Cytoplasm</keyword>
<keyword id="KW-0413">Isomerase</keyword>
<keyword id="KW-0464">Manganese</keyword>
<keyword id="KW-0479">Metal-binding</keyword>
<keyword id="KW-1185">Reference proteome</keyword>
<evidence type="ECO:0000255" key="1">
    <source>
        <dbReference type="HAMAP-Rule" id="MF_00740"/>
    </source>
</evidence>
<name>DEOB_CLOAB</name>
<gene>
    <name evidence="1" type="primary">deoB</name>
    <name type="ordered locus">CA_C2065</name>
</gene>
<proteinExistence type="inferred from homology"/>
<sequence length="390" mass="43398">MVERVILIVLDSVGAGEMPDADKYGDKGSDTIGNISKAVGGLKLPDMVKMGLGNISGIKGVDKVQYPIGAFGKLKEMSKGKDTVTGHWEMSGVILEEPLNTYPNGFPKDIIDEFEKKIGRKVIGNKVASGTEIIKELGDEHIKTGCPIVYTSADSVFQVAAHEEIIPLDELYKICKVAREMLVDDRTVGRVIARPFVGKNSNYTRTSNRRDFALDPFNKTMLEYIKENKSNVMCVGKIEDIFNKKGVTEAVHIKNNMDGVDKTLEYMKTDKKGLIFTNLVDFDMLYGHRNDPKGYAKALEEFDGRINEIKTNMKDYDVLMITADHGCDPTTESTDHSREYIPFIAYGKDIKGGADIKIRDSFSDIGKTILDLLQVENNLVGKSFKDIIMK</sequence>
<reference key="1">
    <citation type="journal article" date="2001" name="J. Bacteriol.">
        <title>Genome sequence and comparative analysis of the solvent-producing bacterium Clostridium acetobutylicum.</title>
        <authorList>
            <person name="Noelling J."/>
            <person name="Breton G."/>
            <person name="Omelchenko M.V."/>
            <person name="Makarova K.S."/>
            <person name="Zeng Q."/>
            <person name="Gibson R."/>
            <person name="Lee H.M."/>
            <person name="Dubois J."/>
            <person name="Qiu D."/>
            <person name="Hitti J."/>
            <person name="Wolf Y.I."/>
            <person name="Tatusov R.L."/>
            <person name="Sabathe F."/>
            <person name="Doucette-Stamm L.A."/>
            <person name="Soucaille P."/>
            <person name="Daly M.J."/>
            <person name="Bennett G.N."/>
            <person name="Koonin E.V."/>
            <person name="Smith D.R."/>
        </authorList>
    </citation>
    <scope>NUCLEOTIDE SEQUENCE [LARGE SCALE GENOMIC DNA]</scope>
    <source>
        <strain>ATCC 824 / DSM 792 / JCM 1419 / IAM 19013 / LMG 5710 / NBRC 13948 / NRRL B-527 / VKM B-1787 / 2291 / W</strain>
    </source>
</reference>
<comment type="function">
    <text evidence="1">Isomerase that catalyzes the conversion of deoxy-ribose 1-phosphate (dRib-1-P) and ribose 1-phosphate (Rib-1-P) to deoxy-ribose 5-phosphate (dRib-5-P) and ribose 5-phosphate (Rib-5-P), respectively.</text>
</comment>
<comment type="catalytic activity">
    <reaction evidence="1">
        <text>2-deoxy-alpha-D-ribose 1-phosphate = 2-deoxy-D-ribose 5-phosphate</text>
        <dbReference type="Rhea" id="RHEA:27658"/>
        <dbReference type="ChEBI" id="CHEBI:57259"/>
        <dbReference type="ChEBI" id="CHEBI:62877"/>
        <dbReference type="EC" id="5.4.2.7"/>
    </reaction>
</comment>
<comment type="catalytic activity">
    <reaction evidence="1">
        <text>alpha-D-ribose 1-phosphate = D-ribose 5-phosphate</text>
        <dbReference type="Rhea" id="RHEA:18793"/>
        <dbReference type="ChEBI" id="CHEBI:57720"/>
        <dbReference type="ChEBI" id="CHEBI:78346"/>
        <dbReference type="EC" id="5.4.2.7"/>
    </reaction>
</comment>
<comment type="cofactor">
    <cofactor evidence="1">
        <name>Mn(2+)</name>
        <dbReference type="ChEBI" id="CHEBI:29035"/>
    </cofactor>
    <text evidence="1">Binds 2 manganese ions.</text>
</comment>
<comment type="pathway">
    <text evidence="1">Carbohydrate degradation; 2-deoxy-D-ribose 1-phosphate degradation; D-glyceraldehyde 3-phosphate and acetaldehyde from 2-deoxy-alpha-D-ribose 1-phosphate: step 1/2.</text>
</comment>
<comment type="subcellular location">
    <subcellularLocation>
        <location evidence="1">Cytoplasm</location>
    </subcellularLocation>
</comment>
<comment type="similarity">
    <text evidence="1">Belongs to the phosphopentomutase family.</text>
</comment>
<accession>Q97HE6</accession>
<organism>
    <name type="scientific">Clostridium acetobutylicum (strain ATCC 824 / DSM 792 / JCM 1419 / IAM 19013 / LMG 5710 / NBRC 13948 / NRRL B-527 / VKM B-1787 / 2291 / W)</name>
    <dbReference type="NCBI Taxonomy" id="272562"/>
    <lineage>
        <taxon>Bacteria</taxon>
        <taxon>Bacillati</taxon>
        <taxon>Bacillota</taxon>
        <taxon>Clostridia</taxon>
        <taxon>Eubacteriales</taxon>
        <taxon>Clostridiaceae</taxon>
        <taxon>Clostridium</taxon>
    </lineage>
</organism>
<protein>
    <recommendedName>
        <fullName evidence="1">Phosphopentomutase</fullName>
        <ecNumber evidence="1">5.4.2.7</ecNumber>
    </recommendedName>
    <alternativeName>
        <fullName evidence="1">Phosphodeoxyribomutase</fullName>
    </alternativeName>
</protein>
<dbReference type="EC" id="5.4.2.7" evidence="1"/>
<dbReference type="EMBL" id="AE001437">
    <property type="protein sequence ID" value="AAK80024.1"/>
    <property type="molecule type" value="Genomic_DNA"/>
</dbReference>
<dbReference type="PIR" id="E97154">
    <property type="entry name" value="E97154"/>
</dbReference>
<dbReference type="RefSeq" id="NP_348684.1">
    <property type="nucleotide sequence ID" value="NC_003030.1"/>
</dbReference>
<dbReference type="RefSeq" id="WP_010965365.1">
    <property type="nucleotide sequence ID" value="NC_003030.1"/>
</dbReference>
<dbReference type="SMR" id="Q97HE6"/>
<dbReference type="STRING" id="272562.CA_C2065"/>
<dbReference type="DNASU" id="1118248"/>
<dbReference type="KEGG" id="cac:CA_C2065"/>
<dbReference type="PATRIC" id="fig|272562.8.peg.2271"/>
<dbReference type="eggNOG" id="COG1015">
    <property type="taxonomic scope" value="Bacteria"/>
</dbReference>
<dbReference type="HOGENOM" id="CLU_053861_0_0_9"/>
<dbReference type="OrthoDB" id="9769930at2"/>
<dbReference type="UniPathway" id="UPA00002">
    <property type="reaction ID" value="UER00467"/>
</dbReference>
<dbReference type="Proteomes" id="UP000000814">
    <property type="component" value="Chromosome"/>
</dbReference>
<dbReference type="GO" id="GO:0005829">
    <property type="term" value="C:cytosol"/>
    <property type="evidence" value="ECO:0007669"/>
    <property type="project" value="TreeGrafter"/>
</dbReference>
<dbReference type="GO" id="GO:0000287">
    <property type="term" value="F:magnesium ion binding"/>
    <property type="evidence" value="ECO:0007669"/>
    <property type="project" value="InterPro"/>
</dbReference>
<dbReference type="GO" id="GO:0030145">
    <property type="term" value="F:manganese ion binding"/>
    <property type="evidence" value="ECO:0007669"/>
    <property type="project" value="UniProtKB-UniRule"/>
</dbReference>
<dbReference type="GO" id="GO:0008973">
    <property type="term" value="F:phosphopentomutase activity"/>
    <property type="evidence" value="ECO:0007669"/>
    <property type="project" value="UniProtKB-UniRule"/>
</dbReference>
<dbReference type="GO" id="GO:0006018">
    <property type="term" value="P:2-deoxyribose 1-phosphate catabolic process"/>
    <property type="evidence" value="ECO:0007669"/>
    <property type="project" value="UniProtKB-UniRule"/>
</dbReference>
<dbReference type="GO" id="GO:0006015">
    <property type="term" value="P:5-phosphoribose 1-diphosphate biosynthetic process"/>
    <property type="evidence" value="ECO:0007669"/>
    <property type="project" value="UniProtKB-UniPathway"/>
</dbReference>
<dbReference type="GO" id="GO:0043094">
    <property type="term" value="P:metabolic compound salvage"/>
    <property type="evidence" value="ECO:0007669"/>
    <property type="project" value="InterPro"/>
</dbReference>
<dbReference type="GO" id="GO:0009117">
    <property type="term" value="P:nucleotide metabolic process"/>
    <property type="evidence" value="ECO:0007669"/>
    <property type="project" value="InterPro"/>
</dbReference>
<dbReference type="CDD" id="cd16009">
    <property type="entry name" value="PPM"/>
    <property type="match status" value="1"/>
</dbReference>
<dbReference type="FunFam" id="3.30.70.1250:FF:000001">
    <property type="entry name" value="Phosphopentomutase"/>
    <property type="match status" value="1"/>
</dbReference>
<dbReference type="Gene3D" id="3.40.720.10">
    <property type="entry name" value="Alkaline Phosphatase, subunit A"/>
    <property type="match status" value="1"/>
</dbReference>
<dbReference type="Gene3D" id="3.30.70.1250">
    <property type="entry name" value="Phosphopentomutase"/>
    <property type="match status" value="1"/>
</dbReference>
<dbReference type="HAMAP" id="MF_00740">
    <property type="entry name" value="Phosphopentomut"/>
    <property type="match status" value="1"/>
</dbReference>
<dbReference type="InterPro" id="IPR017850">
    <property type="entry name" value="Alkaline_phosphatase_core_sf"/>
</dbReference>
<dbReference type="InterPro" id="IPR010045">
    <property type="entry name" value="DeoB"/>
</dbReference>
<dbReference type="InterPro" id="IPR006124">
    <property type="entry name" value="Metalloenzyme"/>
</dbReference>
<dbReference type="InterPro" id="IPR024052">
    <property type="entry name" value="Phosphopentomutase_DeoB_cap_sf"/>
</dbReference>
<dbReference type="NCBIfam" id="TIGR01696">
    <property type="entry name" value="deoB"/>
    <property type="match status" value="1"/>
</dbReference>
<dbReference type="NCBIfam" id="NF003766">
    <property type="entry name" value="PRK05362.1"/>
    <property type="match status" value="1"/>
</dbReference>
<dbReference type="PANTHER" id="PTHR21110">
    <property type="entry name" value="PHOSPHOPENTOMUTASE"/>
    <property type="match status" value="1"/>
</dbReference>
<dbReference type="PANTHER" id="PTHR21110:SF0">
    <property type="entry name" value="PHOSPHOPENTOMUTASE"/>
    <property type="match status" value="1"/>
</dbReference>
<dbReference type="Pfam" id="PF01676">
    <property type="entry name" value="Metalloenzyme"/>
    <property type="match status" value="1"/>
</dbReference>
<dbReference type="PIRSF" id="PIRSF001491">
    <property type="entry name" value="Ppentomutase"/>
    <property type="match status" value="1"/>
</dbReference>
<dbReference type="SUPFAM" id="SSF53649">
    <property type="entry name" value="Alkaline phosphatase-like"/>
    <property type="match status" value="1"/>
</dbReference>
<dbReference type="SUPFAM" id="SSF143856">
    <property type="entry name" value="DeoB insert domain-like"/>
    <property type="match status" value="1"/>
</dbReference>
<feature type="chain" id="PRO_0000199815" description="Phosphopentomutase">
    <location>
        <begin position="1"/>
        <end position="390"/>
    </location>
</feature>
<feature type="binding site" evidence="1">
    <location>
        <position position="11"/>
    </location>
    <ligand>
        <name>Mn(2+)</name>
        <dbReference type="ChEBI" id="CHEBI:29035"/>
        <label>1</label>
    </ligand>
</feature>
<feature type="binding site" evidence="1">
    <location>
        <position position="283"/>
    </location>
    <ligand>
        <name>Mn(2+)</name>
        <dbReference type="ChEBI" id="CHEBI:29035"/>
        <label>2</label>
    </ligand>
</feature>
<feature type="binding site" evidence="1">
    <location>
        <position position="288"/>
    </location>
    <ligand>
        <name>Mn(2+)</name>
        <dbReference type="ChEBI" id="CHEBI:29035"/>
        <label>2</label>
    </ligand>
</feature>
<feature type="binding site" evidence="1">
    <location>
        <position position="324"/>
    </location>
    <ligand>
        <name>Mn(2+)</name>
        <dbReference type="ChEBI" id="CHEBI:29035"/>
        <label>1</label>
    </ligand>
</feature>
<feature type="binding site" evidence="1">
    <location>
        <position position="325"/>
    </location>
    <ligand>
        <name>Mn(2+)</name>
        <dbReference type="ChEBI" id="CHEBI:29035"/>
        <label>1</label>
    </ligand>
</feature>
<feature type="binding site" evidence="1">
    <location>
        <position position="336"/>
    </location>
    <ligand>
        <name>Mn(2+)</name>
        <dbReference type="ChEBI" id="CHEBI:29035"/>
        <label>2</label>
    </ligand>
</feature>